<comment type="function">
    <text evidence="1">Binds to a specific region on the 26S rRNA.</text>
</comment>
<comment type="alternative products">
    <event type="alternative splicing"/>
    <isoform>
        <id>Q9M3C3-1</id>
        <name>1</name>
        <sequence type="displayed"/>
    </isoform>
    <text>A number of isoforms are produced. According to EST sequences.</text>
</comment>
<comment type="similarity">
    <text evidence="3">Belongs to the universal ribosomal protein uL23 family.</text>
</comment>
<sequence length="154" mass="17396">MSPAKVDVTKKADPKAKALKAAKAVKSGQIVKKPAKKIRTKVTFHRPKTLTVPRKPKYPKISATPRNKLDHYQILKYPLTTESAMKKIEDNNTLVFIVDIRADKKKIKDAVKKMYDIQTKKVNTLIRPDGTKKAYVRLTPDYDALDVANKIGII</sequence>
<reference key="1">
    <citation type="journal article" date="2000" name="Nature">
        <title>Sequence and analysis of chromosome 3 of the plant Arabidopsis thaliana.</title>
        <authorList>
            <person name="Salanoubat M."/>
            <person name="Lemcke K."/>
            <person name="Rieger M."/>
            <person name="Ansorge W."/>
            <person name="Unseld M."/>
            <person name="Fartmann B."/>
            <person name="Valle G."/>
            <person name="Bloecker H."/>
            <person name="Perez-Alonso M."/>
            <person name="Obermaier B."/>
            <person name="Delseny M."/>
            <person name="Boutry M."/>
            <person name="Grivell L.A."/>
            <person name="Mache R."/>
            <person name="Puigdomenech P."/>
            <person name="De Simone V."/>
            <person name="Choisne N."/>
            <person name="Artiguenave F."/>
            <person name="Robert C."/>
            <person name="Brottier P."/>
            <person name="Wincker P."/>
            <person name="Cattolico L."/>
            <person name="Weissenbach J."/>
            <person name="Saurin W."/>
            <person name="Quetier F."/>
            <person name="Schaefer M."/>
            <person name="Mueller-Auer S."/>
            <person name="Gabel C."/>
            <person name="Fuchs M."/>
            <person name="Benes V."/>
            <person name="Wurmbach E."/>
            <person name="Drzonek H."/>
            <person name="Erfle H."/>
            <person name="Jordan N."/>
            <person name="Bangert S."/>
            <person name="Wiedelmann R."/>
            <person name="Kranz H."/>
            <person name="Voss H."/>
            <person name="Holland R."/>
            <person name="Brandt P."/>
            <person name="Nyakatura G."/>
            <person name="Vezzi A."/>
            <person name="D'Angelo M."/>
            <person name="Pallavicini A."/>
            <person name="Toppo S."/>
            <person name="Simionati B."/>
            <person name="Conrad A."/>
            <person name="Hornischer K."/>
            <person name="Kauer G."/>
            <person name="Loehnert T.-H."/>
            <person name="Nordsiek G."/>
            <person name="Reichelt J."/>
            <person name="Scharfe M."/>
            <person name="Schoen O."/>
            <person name="Bargues M."/>
            <person name="Terol J."/>
            <person name="Climent J."/>
            <person name="Navarro P."/>
            <person name="Collado C."/>
            <person name="Perez-Perez A."/>
            <person name="Ottenwaelder B."/>
            <person name="Duchemin D."/>
            <person name="Cooke R."/>
            <person name="Laudie M."/>
            <person name="Berger-Llauro C."/>
            <person name="Purnelle B."/>
            <person name="Masuy D."/>
            <person name="de Haan M."/>
            <person name="Maarse A.C."/>
            <person name="Alcaraz J.-P."/>
            <person name="Cottet A."/>
            <person name="Casacuberta E."/>
            <person name="Monfort A."/>
            <person name="Argiriou A."/>
            <person name="Flores M."/>
            <person name="Liguori R."/>
            <person name="Vitale D."/>
            <person name="Mannhaupt G."/>
            <person name="Haase D."/>
            <person name="Schoof H."/>
            <person name="Rudd S."/>
            <person name="Zaccaria P."/>
            <person name="Mewes H.-W."/>
            <person name="Mayer K.F.X."/>
            <person name="Kaul S."/>
            <person name="Town C.D."/>
            <person name="Koo H.L."/>
            <person name="Tallon L.J."/>
            <person name="Jenkins J."/>
            <person name="Rooney T."/>
            <person name="Rizzo M."/>
            <person name="Walts A."/>
            <person name="Utterback T."/>
            <person name="Fujii C.Y."/>
            <person name="Shea T.P."/>
            <person name="Creasy T.H."/>
            <person name="Haas B."/>
            <person name="Maiti R."/>
            <person name="Wu D."/>
            <person name="Peterson J."/>
            <person name="Van Aken S."/>
            <person name="Pai G."/>
            <person name="Militscher J."/>
            <person name="Sellers P."/>
            <person name="Gill J.E."/>
            <person name="Feldblyum T.V."/>
            <person name="Preuss D."/>
            <person name="Lin X."/>
            <person name="Nierman W.C."/>
            <person name="Salzberg S.L."/>
            <person name="White O."/>
            <person name="Venter J.C."/>
            <person name="Fraser C.M."/>
            <person name="Kaneko T."/>
            <person name="Nakamura Y."/>
            <person name="Sato S."/>
            <person name="Kato T."/>
            <person name="Asamizu E."/>
            <person name="Sasamoto S."/>
            <person name="Kimura T."/>
            <person name="Idesawa K."/>
            <person name="Kawashima K."/>
            <person name="Kishida Y."/>
            <person name="Kiyokawa C."/>
            <person name="Kohara M."/>
            <person name="Matsumoto M."/>
            <person name="Matsuno A."/>
            <person name="Muraki A."/>
            <person name="Nakayama S."/>
            <person name="Nakazaki N."/>
            <person name="Shinpo S."/>
            <person name="Takeuchi C."/>
            <person name="Wada T."/>
            <person name="Watanabe A."/>
            <person name="Yamada M."/>
            <person name="Yasuda M."/>
            <person name="Tabata S."/>
        </authorList>
    </citation>
    <scope>NUCLEOTIDE SEQUENCE [LARGE SCALE GENOMIC DNA]</scope>
    <source>
        <strain>cv. Columbia</strain>
    </source>
</reference>
<reference key="2">
    <citation type="journal article" date="2017" name="Plant J.">
        <title>Araport11: a complete reannotation of the Arabidopsis thaliana reference genome.</title>
        <authorList>
            <person name="Cheng C.Y."/>
            <person name="Krishnakumar V."/>
            <person name="Chan A.P."/>
            <person name="Thibaud-Nissen F."/>
            <person name="Schobel S."/>
            <person name="Town C.D."/>
        </authorList>
    </citation>
    <scope>GENOME REANNOTATION</scope>
    <source>
        <strain>cv. Columbia</strain>
    </source>
</reference>
<reference key="3">
    <citation type="journal article" date="2003" name="Science">
        <title>Empirical analysis of transcriptional activity in the Arabidopsis genome.</title>
        <authorList>
            <person name="Yamada K."/>
            <person name="Lim J."/>
            <person name="Dale J.M."/>
            <person name="Chen H."/>
            <person name="Shinn P."/>
            <person name="Palm C.J."/>
            <person name="Southwick A.M."/>
            <person name="Wu H.C."/>
            <person name="Kim C.J."/>
            <person name="Nguyen M."/>
            <person name="Pham P.K."/>
            <person name="Cheuk R.F."/>
            <person name="Karlin-Newmann G."/>
            <person name="Liu S.X."/>
            <person name="Lam B."/>
            <person name="Sakano H."/>
            <person name="Wu T."/>
            <person name="Yu G."/>
            <person name="Miranda M."/>
            <person name="Quach H.L."/>
            <person name="Tripp M."/>
            <person name="Chang C.H."/>
            <person name="Lee J.M."/>
            <person name="Toriumi M.J."/>
            <person name="Chan M.M."/>
            <person name="Tang C.C."/>
            <person name="Onodera C.S."/>
            <person name="Deng J.M."/>
            <person name="Akiyama K."/>
            <person name="Ansari Y."/>
            <person name="Arakawa T."/>
            <person name="Banh J."/>
            <person name="Banno F."/>
            <person name="Bowser L."/>
            <person name="Brooks S.Y."/>
            <person name="Carninci P."/>
            <person name="Chao Q."/>
            <person name="Choy N."/>
            <person name="Enju A."/>
            <person name="Goldsmith A.D."/>
            <person name="Gurjal M."/>
            <person name="Hansen N.F."/>
            <person name="Hayashizaki Y."/>
            <person name="Johnson-Hopson C."/>
            <person name="Hsuan V.W."/>
            <person name="Iida K."/>
            <person name="Karnes M."/>
            <person name="Khan S."/>
            <person name="Koesema E."/>
            <person name="Ishida J."/>
            <person name="Jiang P.X."/>
            <person name="Jones T."/>
            <person name="Kawai J."/>
            <person name="Kamiya A."/>
            <person name="Meyers C."/>
            <person name="Nakajima M."/>
            <person name="Narusaka M."/>
            <person name="Seki M."/>
            <person name="Sakurai T."/>
            <person name="Satou M."/>
            <person name="Tamse R."/>
            <person name="Vaysberg M."/>
            <person name="Wallender E.K."/>
            <person name="Wong C."/>
            <person name="Yamamura Y."/>
            <person name="Yuan S."/>
            <person name="Shinozaki K."/>
            <person name="Davis R.W."/>
            <person name="Theologis A."/>
            <person name="Ecker J.R."/>
        </authorList>
    </citation>
    <scope>NUCLEOTIDE SEQUENCE [LARGE SCALE MRNA]</scope>
    <source>
        <strain>cv. Columbia</strain>
    </source>
</reference>
<reference key="4">
    <citation type="submission" date="2002-03" db="EMBL/GenBank/DDBJ databases">
        <title>Full-length cDNA from Arabidopsis thaliana.</title>
        <authorList>
            <person name="Brover V.V."/>
            <person name="Troukhan M.E."/>
            <person name="Alexandrov N.A."/>
            <person name="Lu Y.-P."/>
            <person name="Flavell R.B."/>
            <person name="Feldmann K.A."/>
        </authorList>
    </citation>
    <scope>NUCLEOTIDE SEQUENCE [LARGE SCALE MRNA]</scope>
</reference>
<reference key="5">
    <citation type="journal article" date="2001" name="Plant Physiol.">
        <title>The organization of cytoplasmic ribosomal protein genes in the Arabidopsis genome.</title>
        <authorList>
            <person name="Barakat A."/>
            <person name="Szick-Miranda K."/>
            <person name="Chang I.-F."/>
            <person name="Guyot R."/>
            <person name="Blanc G."/>
            <person name="Cooke R."/>
            <person name="Delseny M."/>
            <person name="Bailey-Serres J."/>
        </authorList>
    </citation>
    <scope>GENE FAMILY ORGANIZATION</scope>
    <scope>NOMENCLATURE</scope>
</reference>
<reference key="6">
    <citation type="journal article" date="2023" name="Plant Cell">
        <title>An updated nomenclature for plant ribosomal protein genes.</title>
        <authorList>
            <person name="Scarpin M.R."/>
            <person name="Busche M."/>
            <person name="Martinez R.E."/>
            <person name="Harper L.C."/>
            <person name="Reiser L."/>
            <person name="Szakonyi D."/>
            <person name="Merchante C."/>
            <person name="Lan T."/>
            <person name="Xiong W."/>
            <person name="Mo B."/>
            <person name="Tang G."/>
            <person name="Chen X."/>
            <person name="Bailey-Serres J."/>
            <person name="Browning K.S."/>
            <person name="Brunkard J.O."/>
        </authorList>
    </citation>
    <scope>NOMENCLATURE</scope>
</reference>
<proteinExistence type="evidence at transcript level"/>
<protein>
    <recommendedName>
        <fullName evidence="2">Large ribosomal subunit protein uL23y</fullName>
    </recommendedName>
    <alternativeName>
        <fullName>60S ribosomal protein L23a-2</fullName>
    </alternativeName>
</protein>
<feature type="chain" id="PRO_0000129474" description="Large ribosomal subunit protein uL23y">
    <location>
        <begin position="1"/>
        <end position="154"/>
    </location>
</feature>
<dbReference type="EMBL" id="AL132954">
    <property type="protein sequence ID" value="CAB75762.1"/>
    <property type="molecule type" value="Genomic_DNA"/>
</dbReference>
<dbReference type="EMBL" id="CP002686">
    <property type="protein sequence ID" value="AEE79362.1"/>
    <property type="molecule type" value="Genomic_DNA"/>
</dbReference>
<dbReference type="EMBL" id="CP002686">
    <property type="protein sequence ID" value="AEE79363.1"/>
    <property type="molecule type" value="Genomic_DNA"/>
</dbReference>
<dbReference type="EMBL" id="AY050445">
    <property type="protein sequence ID" value="AAK91460.1"/>
    <property type="molecule type" value="mRNA"/>
</dbReference>
<dbReference type="EMBL" id="BT000478">
    <property type="protein sequence ID" value="AAN18047.1"/>
    <property type="molecule type" value="mRNA"/>
</dbReference>
<dbReference type="EMBL" id="AY085736">
    <property type="protein sequence ID" value="AAM62954.1"/>
    <property type="molecule type" value="mRNA"/>
</dbReference>
<dbReference type="PIR" id="T47667">
    <property type="entry name" value="T47667"/>
</dbReference>
<dbReference type="RefSeq" id="NP_001078293.1">
    <molecule id="Q9M3C3-1"/>
    <property type="nucleotide sequence ID" value="NM_001084824.1"/>
</dbReference>
<dbReference type="RefSeq" id="NP_191088.1">
    <molecule id="Q9M3C3-1"/>
    <property type="nucleotide sequence ID" value="NM_115386.3"/>
</dbReference>
<dbReference type="SMR" id="Q9M3C3"/>
<dbReference type="BioGRID" id="10010">
    <property type="interactions" value="145"/>
</dbReference>
<dbReference type="FunCoup" id="Q9M3C3">
    <property type="interactions" value="2948"/>
</dbReference>
<dbReference type="IntAct" id="Q9M3C3">
    <property type="interactions" value="1"/>
</dbReference>
<dbReference type="STRING" id="3702.Q9M3C3"/>
<dbReference type="iPTMnet" id="Q9M3C3"/>
<dbReference type="PaxDb" id="3702-AT3G55280.1"/>
<dbReference type="ProteomicsDB" id="236553">
    <molecule id="Q9M3C3-1"/>
</dbReference>
<dbReference type="EnsemblPlants" id="AT3G55280.1">
    <molecule id="Q9M3C3-1"/>
    <property type="protein sequence ID" value="AT3G55280.1"/>
    <property type="gene ID" value="AT3G55280"/>
</dbReference>
<dbReference type="EnsemblPlants" id="AT3G55280.2">
    <molecule id="Q9M3C3-1"/>
    <property type="protein sequence ID" value="AT3G55280.2"/>
    <property type="gene ID" value="AT3G55280"/>
</dbReference>
<dbReference type="GeneID" id="824694"/>
<dbReference type="Gramene" id="AT3G55280.1">
    <molecule id="Q9M3C3-1"/>
    <property type="protein sequence ID" value="AT3G55280.1"/>
    <property type="gene ID" value="AT3G55280"/>
</dbReference>
<dbReference type="Gramene" id="AT3G55280.2">
    <molecule id="Q9M3C3-1"/>
    <property type="protein sequence ID" value="AT3G55280.2"/>
    <property type="gene ID" value="AT3G55280"/>
</dbReference>
<dbReference type="KEGG" id="ath:AT3G55280"/>
<dbReference type="Araport" id="AT3G55280"/>
<dbReference type="TAIR" id="AT3G55280">
    <property type="gene designation" value="RPL23AB"/>
</dbReference>
<dbReference type="eggNOG" id="KOG1751">
    <property type="taxonomic scope" value="Eukaryota"/>
</dbReference>
<dbReference type="InParanoid" id="Q9M3C3"/>
<dbReference type="OMA" id="YYTIKFL"/>
<dbReference type="OrthoDB" id="1103871at2759"/>
<dbReference type="PhylomeDB" id="Q9M3C3"/>
<dbReference type="PRO" id="PR:Q9M3C3"/>
<dbReference type="Proteomes" id="UP000006548">
    <property type="component" value="Chromosome 3"/>
</dbReference>
<dbReference type="ExpressionAtlas" id="Q9M3C3">
    <property type="expression patterns" value="baseline and differential"/>
</dbReference>
<dbReference type="GO" id="GO:0005829">
    <property type="term" value="C:cytosol"/>
    <property type="evidence" value="ECO:0007005"/>
    <property type="project" value="TAIR"/>
</dbReference>
<dbReference type="GO" id="GO:0022625">
    <property type="term" value="C:cytosolic large ribosomal subunit"/>
    <property type="evidence" value="ECO:0007005"/>
    <property type="project" value="TAIR"/>
</dbReference>
<dbReference type="GO" id="GO:0022626">
    <property type="term" value="C:cytosolic ribosome"/>
    <property type="evidence" value="ECO:0007005"/>
    <property type="project" value="TAIR"/>
</dbReference>
<dbReference type="GO" id="GO:0003729">
    <property type="term" value="F:mRNA binding"/>
    <property type="evidence" value="ECO:0000314"/>
    <property type="project" value="TAIR"/>
</dbReference>
<dbReference type="GO" id="GO:0019843">
    <property type="term" value="F:rRNA binding"/>
    <property type="evidence" value="ECO:0007669"/>
    <property type="project" value="UniProtKB-KW"/>
</dbReference>
<dbReference type="GO" id="GO:0003735">
    <property type="term" value="F:structural constituent of ribosome"/>
    <property type="evidence" value="ECO:0000314"/>
    <property type="project" value="CAFA"/>
</dbReference>
<dbReference type="GO" id="GO:0009409">
    <property type="term" value="P:response to cold"/>
    <property type="evidence" value="ECO:0000270"/>
    <property type="project" value="TAIR"/>
</dbReference>
<dbReference type="GO" id="GO:0009644">
    <property type="term" value="P:response to high light intensity"/>
    <property type="evidence" value="ECO:0000270"/>
    <property type="project" value="TAIR"/>
</dbReference>
<dbReference type="GO" id="GO:0006979">
    <property type="term" value="P:response to oxidative stress"/>
    <property type="evidence" value="ECO:0000270"/>
    <property type="project" value="TAIR"/>
</dbReference>
<dbReference type="GO" id="GO:0006412">
    <property type="term" value="P:translation"/>
    <property type="evidence" value="ECO:0007669"/>
    <property type="project" value="InterPro"/>
</dbReference>
<dbReference type="FunFam" id="3.30.70.330:FF:000035">
    <property type="entry name" value="60S ribosomal protein L23a"/>
    <property type="match status" value="1"/>
</dbReference>
<dbReference type="Gene3D" id="3.30.70.330">
    <property type="match status" value="1"/>
</dbReference>
<dbReference type="HAMAP" id="MF_01369_A">
    <property type="entry name" value="Ribosomal_uL23_A"/>
    <property type="match status" value="1"/>
</dbReference>
<dbReference type="InterPro" id="IPR012677">
    <property type="entry name" value="Nucleotide-bd_a/b_plait_sf"/>
</dbReference>
<dbReference type="InterPro" id="IPR019985">
    <property type="entry name" value="Ribosomal_uL23"/>
</dbReference>
<dbReference type="InterPro" id="IPR013025">
    <property type="entry name" value="Ribosomal_uL23-like"/>
</dbReference>
<dbReference type="InterPro" id="IPR012678">
    <property type="entry name" value="Ribosomal_uL23/eL15/eS24_sf"/>
</dbReference>
<dbReference type="InterPro" id="IPR001014">
    <property type="entry name" value="Ribosomal_uL23_CS"/>
</dbReference>
<dbReference type="InterPro" id="IPR005633">
    <property type="entry name" value="Ribosomal_uL23_N"/>
</dbReference>
<dbReference type="NCBIfam" id="NF011118">
    <property type="entry name" value="PRK14548.1"/>
    <property type="match status" value="1"/>
</dbReference>
<dbReference type="NCBIfam" id="TIGR03636">
    <property type="entry name" value="uL23_arch"/>
    <property type="match status" value="1"/>
</dbReference>
<dbReference type="PANTHER" id="PTHR11620">
    <property type="entry name" value="60S RIBOSOMAL PROTEIN L23A"/>
    <property type="match status" value="1"/>
</dbReference>
<dbReference type="Pfam" id="PF00276">
    <property type="entry name" value="Ribosomal_L23"/>
    <property type="match status" value="1"/>
</dbReference>
<dbReference type="Pfam" id="PF03939">
    <property type="entry name" value="Ribosomal_L23eN"/>
    <property type="match status" value="1"/>
</dbReference>
<dbReference type="SUPFAM" id="SSF54189">
    <property type="entry name" value="Ribosomal proteins S24e, L23 and L15e"/>
    <property type="match status" value="1"/>
</dbReference>
<dbReference type="PROSITE" id="PS00050">
    <property type="entry name" value="RIBOSOMAL_L23"/>
    <property type="match status" value="1"/>
</dbReference>
<gene>
    <name type="primary">RPL23AB</name>
    <name type="ordered locus">At3g55280</name>
    <name type="ORF">T26I12.160</name>
</gene>
<organism>
    <name type="scientific">Arabidopsis thaliana</name>
    <name type="common">Mouse-ear cress</name>
    <dbReference type="NCBI Taxonomy" id="3702"/>
    <lineage>
        <taxon>Eukaryota</taxon>
        <taxon>Viridiplantae</taxon>
        <taxon>Streptophyta</taxon>
        <taxon>Embryophyta</taxon>
        <taxon>Tracheophyta</taxon>
        <taxon>Spermatophyta</taxon>
        <taxon>Magnoliopsida</taxon>
        <taxon>eudicotyledons</taxon>
        <taxon>Gunneridae</taxon>
        <taxon>Pentapetalae</taxon>
        <taxon>rosids</taxon>
        <taxon>malvids</taxon>
        <taxon>Brassicales</taxon>
        <taxon>Brassicaceae</taxon>
        <taxon>Camelineae</taxon>
        <taxon>Arabidopsis</taxon>
    </lineage>
</organism>
<accession>Q9M3C3</accession>
<name>R23A2_ARATH</name>
<keyword id="KW-0025">Alternative splicing</keyword>
<keyword id="KW-1185">Reference proteome</keyword>
<keyword id="KW-0687">Ribonucleoprotein</keyword>
<keyword id="KW-0689">Ribosomal protein</keyword>
<keyword id="KW-0694">RNA-binding</keyword>
<keyword id="KW-0699">rRNA-binding</keyword>
<evidence type="ECO:0000250" key="1"/>
<evidence type="ECO:0000303" key="2">
    <source>
    </source>
</evidence>
<evidence type="ECO:0000305" key="3"/>